<proteinExistence type="predicted"/>
<reference key="1">
    <citation type="journal article" date="2005" name="Nature">
        <title>The genome of the social amoeba Dictyostelium discoideum.</title>
        <authorList>
            <person name="Eichinger L."/>
            <person name="Pachebat J.A."/>
            <person name="Gloeckner G."/>
            <person name="Rajandream M.A."/>
            <person name="Sucgang R."/>
            <person name="Berriman M."/>
            <person name="Song J."/>
            <person name="Olsen R."/>
            <person name="Szafranski K."/>
            <person name="Xu Q."/>
            <person name="Tunggal B."/>
            <person name="Kummerfeld S."/>
            <person name="Madera M."/>
            <person name="Konfortov B.A."/>
            <person name="Rivero F."/>
            <person name="Bankier A.T."/>
            <person name="Lehmann R."/>
            <person name="Hamlin N."/>
            <person name="Davies R."/>
            <person name="Gaudet P."/>
            <person name="Fey P."/>
            <person name="Pilcher K."/>
            <person name="Chen G."/>
            <person name="Saunders D."/>
            <person name="Sodergren E.J."/>
            <person name="Davis P."/>
            <person name="Kerhornou A."/>
            <person name="Nie X."/>
            <person name="Hall N."/>
            <person name="Anjard C."/>
            <person name="Hemphill L."/>
            <person name="Bason N."/>
            <person name="Farbrother P."/>
            <person name="Desany B."/>
            <person name="Just E."/>
            <person name="Morio T."/>
            <person name="Rost R."/>
            <person name="Churcher C.M."/>
            <person name="Cooper J."/>
            <person name="Haydock S."/>
            <person name="van Driessche N."/>
            <person name="Cronin A."/>
            <person name="Goodhead I."/>
            <person name="Muzny D.M."/>
            <person name="Mourier T."/>
            <person name="Pain A."/>
            <person name="Lu M."/>
            <person name="Harper D."/>
            <person name="Lindsay R."/>
            <person name="Hauser H."/>
            <person name="James K.D."/>
            <person name="Quiles M."/>
            <person name="Madan Babu M."/>
            <person name="Saito T."/>
            <person name="Buchrieser C."/>
            <person name="Wardroper A."/>
            <person name="Felder M."/>
            <person name="Thangavelu M."/>
            <person name="Johnson D."/>
            <person name="Knights A."/>
            <person name="Loulseged H."/>
            <person name="Mungall K.L."/>
            <person name="Oliver K."/>
            <person name="Price C."/>
            <person name="Quail M.A."/>
            <person name="Urushihara H."/>
            <person name="Hernandez J."/>
            <person name="Rabbinowitsch E."/>
            <person name="Steffen D."/>
            <person name="Sanders M."/>
            <person name="Ma J."/>
            <person name="Kohara Y."/>
            <person name="Sharp S."/>
            <person name="Simmonds M.N."/>
            <person name="Spiegler S."/>
            <person name="Tivey A."/>
            <person name="Sugano S."/>
            <person name="White B."/>
            <person name="Walker D."/>
            <person name="Woodward J.R."/>
            <person name="Winckler T."/>
            <person name="Tanaka Y."/>
            <person name="Shaulsky G."/>
            <person name="Schleicher M."/>
            <person name="Weinstock G.M."/>
            <person name="Rosenthal A."/>
            <person name="Cox E.C."/>
            <person name="Chisholm R.L."/>
            <person name="Gibbs R.A."/>
            <person name="Loomis W.F."/>
            <person name="Platzer M."/>
            <person name="Kay R.R."/>
            <person name="Williams J.G."/>
            <person name="Dear P.H."/>
            <person name="Noegel A.A."/>
            <person name="Barrell B.G."/>
            <person name="Kuspa A."/>
        </authorList>
    </citation>
    <scope>NUCLEOTIDE SEQUENCE [LARGE SCALE GENOMIC DNA]</scope>
    <source>
        <strain>AX4</strain>
    </source>
</reference>
<sequence>MDTPNNRGINIRFVTNKKVLWPEDVAAKLFSQYQTMLATKLYTKDMEIVEILSGTTPFKGVYTLEQIKSKIKNQKHSLSMKNLALQKTSQQIDSSPPQTPTTSNGSMMTRRQNANNAISSNNNTNTNVTNGSSSNTSLNGGDEEQEEEEEEENDEDSITNKEDSDSYDDFSIVEETTDIREVQDTRSFKKVKLNSLTSLNEGYIVPPTPQIEMVSPNRNNNNNNINKNNNNNINNNNNNNNNIFNFLQDQDQNQNKPNKPNNQSNFSNQSQQLQNLINATANENKKLKLSMEQLEFQLKMEKEQNLKLKNLVTKLNEEIQLEKEISKQINKSICSNLNIQNSRSISTNSVIFKKDSNDDSIVAIFPTFITTTNSNSSEITLTIDPNPPENYHKIIIKQQLHQHHQHQQQQQQQQPQIQTYLIKKLQDYYDPEPCLIGSTNSKGVYFKSKDKSLLKISIDNLRDFD</sequence>
<dbReference type="EMBL" id="AAFI02000120">
    <property type="protein sequence ID" value="EAL63101.1"/>
    <property type="status" value="ALT_SEQ"/>
    <property type="molecule type" value="Genomic_DNA"/>
</dbReference>
<dbReference type="RefSeq" id="XP_636578.1">
    <property type="nucleotide sequence ID" value="XM_631486.1"/>
</dbReference>
<dbReference type="SMR" id="Q54IK8"/>
<dbReference type="GlyGen" id="Q54IK8">
    <property type="glycosylation" value="1 site"/>
</dbReference>
<dbReference type="PaxDb" id="44689-DDB0219372"/>
<dbReference type="EnsemblProtists" id="EAL63101">
    <property type="protein sequence ID" value="EAL63101"/>
    <property type="gene ID" value="DDB_G0288739"/>
</dbReference>
<dbReference type="GeneID" id="8626751"/>
<dbReference type="KEGG" id="ddi:DDB_G0288739"/>
<dbReference type="VEuPathDB" id="AmoebaDB:DDB_G0288739"/>
<dbReference type="VEuPathDB" id="AmoebaDB:DDB_G0288741"/>
<dbReference type="InParanoid" id="Q54IK8"/>
<dbReference type="PRO" id="PR:Q54IK8"/>
<dbReference type="Proteomes" id="UP000002195">
    <property type="component" value="Chromosome 5"/>
</dbReference>
<evidence type="ECO:0000256" key="1">
    <source>
        <dbReference type="SAM" id="MobiDB-lite"/>
    </source>
</evidence>
<evidence type="ECO:0000305" key="2"/>
<organism>
    <name type="scientific">Dictyostelium discoideum</name>
    <name type="common">Social amoeba</name>
    <dbReference type="NCBI Taxonomy" id="44689"/>
    <lineage>
        <taxon>Eukaryota</taxon>
        <taxon>Amoebozoa</taxon>
        <taxon>Evosea</taxon>
        <taxon>Eumycetozoa</taxon>
        <taxon>Dictyostelia</taxon>
        <taxon>Dictyosteliales</taxon>
        <taxon>Dictyosteliaceae</taxon>
        <taxon>Dictyostelium</taxon>
    </lineage>
</organism>
<protein>
    <recommendedName>
        <fullName>Uncharacterized protein DDB_G0288739</fullName>
    </recommendedName>
</protein>
<comment type="sequence caution" evidence="2">
    <conflict type="erroneous gene model prediction">
        <sequence resource="EMBL-CDS" id="EAL63101"/>
    </conflict>
</comment>
<name>Y9372_DICDI</name>
<accession>Q54IK8</accession>
<feature type="chain" id="PRO_0000346976" description="Uncharacterized protein DDB_G0288739">
    <location>
        <begin position="1"/>
        <end position="465"/>
    </location>
</feature>
<feature type="region of interest" description="Disordered" evidence="1">
    <location>
        <begin position="87"/>
        <end position="169"/>
    </location>
</feature>
<feature type="region of interest" description="Disordered" evidence="1">
    <location>
        <begin position="201"/>
        <end position="244"/>
    </location>
</feature>
<feature type="compositionally biased region" description="Polar residues" evidence="1">
    <location>
        <begin position="87"/>
        <end position="112"/>
    </location>
</feature>
<feature type="compositionally biased region" description="Low complexity" evidence="1">
    <location>
        <begin position="113"/>
        <end position="139"/>
    </location>
</feature>
<feature type="compositionally biased region" description="Acidic residues" evidence="1">
    <location>
        <begin position="141"/>
        <end position="157"/>
    </location>
</feature>
<feature type="compositionally biased region" description="Low complexity" evidence="1">
    <location>
        <begin position="217"/>
        <end position="244"/>
    </location>
</feature>
<keyword id="KW-1185">Reference proteome</keyword>
<gene>
    <name type="ORF">DDB_G0288739</name>
</gene>